<accession>Q9I1M0</accession>
<accession>Q99384</accession>
<dbReference type="EC" id="2.3.1.168"/>
<dbReference type="EMBL" id="AE004091">
    <property type="protein sequence ID" value="AAG05637.1"/>
    <property type="molecule type" value="Genomic_DNA"/>
</dbReference>
<dbReference type="PIR" id="E83365">
    <property type="entry name" value="E83365"/>
</dbReference>
<dbReference type="RefSeq" id="NP_250939.1">
    <property type="nucleotide sequence ID" value="NC_002516.2"/>
</dbReference>
<dbReference type="RefSeq" id="WP_003113728.1">
    <property type="nucleotide sequence ID" value="NZ_QZGE01000014.1"/>
</dbReference>
<dbReference type="SMR" id="Q9I1M0"/>
<dbReference type="STRING" id="208964.PA2249"/>
<dbReference type="PaxDb" id="208964-PA2249"/>
<dbReference type="GeneID" id="880679"/>
<dbReference type="KEGG" id="pae:PA2249"/>
<dbReference type="PATRIC" id="fig|208964.12.peg.2350"/>
<dbReference type="PseudoCAP" id="PA2249"/>
<dbReference type="HOGENOM" id="CLU_016733_10_0_6"/>
<dbReference type="InParanoid" id="Q9I1M0"/>
<dbReference type="OrthoDB" id="9805770at2"/>
<dbReference type="PhylomeDB" id="Q9I1M0"/>
<dbReference type="BioCyc" id="PAER208964:G1FZ6-2288-MONOMER"/>
<dbReference type="Proteomes" id="UP000002438">
    <property type="component" value="Chromosome"/>
</dbReference>
<dbReference type="GO" id="GO:0005737">
    <property type="term" value="C:cytoplasm"/>
    <property type="evidence" value="ECO:0000318"/>
    <property type="project" value="GO_Central"/>
</dbReference>
<dbReference type="GO" id="GO:0016407">
    <property type="term" value="F:acetyltransferase activity"/>
    <property type="evidence" value="ECO:0000318"/>
    <property type="project" value="GO_Central"/>
</dbReference>
<dbReference type="GO" id="GO:0043754">
    <property type="term" value="F:dihydrolipoyllysine-residue (2-methylpropanoyl)transferase activity"/>
    <property type="evidence" value="ECO:0007669"/>
    <property type="project" value="UniProtKB-EC"/>
</dbReference>
<dbReference type="GO" id="GO:0031405">
    <property type="term" value="F:lipoic acid binding"/>
    <property type="evidence" value="ECO:0000318"/>
    <property type="project" value="GO_Central"/>
</dbReference>
<dbReference type="GO" id="GO:0006096">
    <property type="term" value="P:glycolytic process"/>
    <property type="evidence" value="ECO:0007669"/>
    <property type="project" value="UniProtKB-KW"/>
</dbReference>
<dbReference type="CDD" id="cd06849">
    <property type="entry name" value="lipoyl_domain"/>
    <property type="match status" value="1"/>
</dbReference>
<dbReference type="FunFam" id="3.30.559.10:FF:000007">
    <property type="entry name" value="Dihydrolipoamide acetyltransferase component of pyruvate dehydrogenase complex"/>
    <property type="match status" value="1"/>
</dbReference>
<dbReference type="FunFam" id="4.10.320.10:FF:000002">
    <property type="entry name" value="Dihydrolipoamide acetyltransferase component of pyruvate dehydrogenase complex"/>
    <property type="match status" value="1"/>
</dbReference>
<dbReference type="Gene3D" id="2.40.50.100">
    <property type="match status" value="1"/>
</dbReference>
<dbReference type="Gene3D" id="3.30.559.10">
    <property type="entry name" value="Chloramphenicol acetyltransferase-like domain"/>
    <property type="match status" value="1"/>
</dbReference>
<dbReference type="Gene3D" id="4.10.320.10">
    <property type="entry name" value="E3-binding domain"/>
    <property type="match status" value="1"/>
</dbReference>
<dbReference type="InterPro" id="IPR003016">
    <property type="entry name" value="2-oxoA_DH_lipoyl-BS"/>
</dbReference>
<dbReference type="InterPro" id="IPR001078">
    <property type="entry name" value="2-oxoacid_DH_actylTfrase"/>
</dbReference>
<dbReference type="InterPro" id="IPR050743">
    <property type="entry name" value="2-oxoacid_DH_E2_comp"/>
</dbReference>
<dbReference type="InterPro" id="IPR000089">
    <property type="entry name" value="Biotin_lipoyl"/>
</dbReference>
<dbReference type="InterPro" id="IPR023213">
    <property type="entry name" value="CAT-like_dom_sf"/>
</dbReference>
<dbReference type="InterPro" id="IPR036625">
    <property type="entry name" value="E3-bd_dom_sf"/>
</dbReference>
<dbReference type="InterPro" id="IPR004167">
    <property type="entry name" value="PSBD"/>
</dbReference>
<dbReference type="InterPro" id="IPR011053">
    <property type="entry name" value="Single_hybrid_motif"/>
</dbReference>
<dbReference type="PANTHER" id="PTHR43178">
    <property type="entry name" value="DIHYDROLIPOAMIDE ACETYLTRANSFERASE COMPONENT OF PYRUVATE DEHYDROGENASE COMPLEX"/>
    <property type="match status" value="1"/>
</dbReference>
<dbReference type="PANTHER" id="PTHR43178:SF5">
    <property type="entry name" value="LIPOAMIDE ACYLTRANSFERASE COMPONENT OF BRANCHED-CHAIN ALPHA-KETO ACID DEHYDROGENASE COMPLEX, MITOCHONDRIAL"/>
    <property type="match status" value="1"/>
</dbReference>
<dbReference type="Pfam" id="PF00198">
    <property type="entry name" value="2-oxoacid_dh"/>
    <property type="match status" value="1"/>
</dbReference>
<dbReference type="Pfam" id="PF00364">
    <property type="entry name" value="Biotin_lipoyl"/>
    <property type="match status" value="1"/>
</dbReference>
<dbReference type="Pfam" id="PF02817">
    <property type="entry name" value="E3_binding"/>
    <property type="match status" value="1"/>
</dbReference>
<dbReference type="SUPFAM" id="SSF52777">
    <property type="entry name" value="CoA-dependent acyltransferases"/>
    <property type="match status" value="1"/>
</dbReference>
<dbReference type="SUPFAM" id="SSF47005">
    <property type="entry name" value="Peripheral subunit-binding domain of 2-oxo acid dehydrogenase complex"/>
    <property type="match status" value="1"/>
</dbReference>
<dbReference type="SUPFAM" id="SSF51230">
    <property type="entry name" value="Single hybrid motif"/>
    <property type="match status" value="1"/>
</dbReference>
<dbReference type="PROSITE" id="PS50968">
    <property type="entry name" value="BIOTINYL_LIPOYL"/>
    <property type="match status" value="1"/>
</dbReference>
<dbReference type="PROSITE" id="PS00189">
    <property type="entry name" value="LIPOYL"/>
    <property type="match status" value="1"/>
</dbReference>
<dbReference type="PROSITE" id="PS51826">
    <property type="entry name" value="PSBD"/>
    <property type="match status" value="1"/>
</dbReference>
<organism>
    <name type="scientific">Pseudomonas aeruginosa (strain ATCC 15692 / DSM 22644 / CIP 104116 / JCM 14847 / LMG 12228 / 1C / PRS 101 / PAO1)</name>
    <dbReference type="NCBI Taxonomy" id="208964"/>
    <lineage>
        <taxon>Bacteria</taxon>
        <taxon>Pseudomonadati</taxon>
        <taxon>Pseudomonadota</taxon>
        <taxon>Gammaproteobacteria</taxon>
        <taxon>Pseudomonadales</taxon>
        <taxon>Pseudomonadaceae</taxon>
        <taxon>Pseudomonas</taxon>
    </lineage>
</organism>
<protein>
    <recommendedName>
        <fullName>Lipoamide acyltransferase component of branched-chain alpha-keto acid dehydrogenase complex</fullName>
        <ecNumber>2.3.1.168</ecNumber>
    </recommendedName>
    <alternativeName>
        <fullName>Branched-chain alpha-keto acid dehydrogenase complex component E2</fullName>
        <shortName>BCKAD-E2</shortName>
        <shortName>BCKADE2</shortName>
    </alternativeName>
    <alternativeName>
        <fullName>Dihydrolipoamide acetyltransferase component of branched-chain alpha-keto acid dehydrogenase complex</fullName>
    </alternativeName>
    <alternativeName>
        <fullName>Dihydrolipoamide branched chain transacylase</fullName>
    </alternativeName>
    <alternativeName>
        <fullName>Dihydrolipoyllysine-residue (2-methylpropanoyl)transferase</fullName>
    </alternativeName>
</protein>
<name>ODB2_PSEAE</name>
<keyword id="KW-0012">Acyltransferase</keyword>
<keyword id="KW-0903">Direct protein sequencing</keyword>
<keyword id="KW-0324">Glycolysis</keyword>
<keyword id="KW-0450">Lipoyl</keyword>
<keyword id="KW-1185">Reference proteome</keyword>
<keyword id="KW-0808">Transferase</keyword>
<sequence>MGTHVIKMPDIGEGIAEVELVEWHVQVGDSVNEDQVLAEVMTDKATVEIPSPVAGRILALGGQPGQVMAVGGELIRLEVEGAGNLAESPAAATPAAPVAATPEKPKEAPVAAPKAAAEAPRALRDSEAPRQRRQPGERPLASPAVRQRARDLGIELQFVQGSGPAGRVLHEDLDAYLTQDGSVARSGGAAQGYAERHDEQAVPVIGLRRKIAQKMQDAKRRIPHFSYVEEIDVTDLEALRAHLNQKWGGQRGKLTLLPFLVRAMVVALRDFPQLNARYDDEAEVVTRYGAVHVGIATQSDNGLMVPVLRHAESRDLWGNASEVARLAEAARSGKAQRQELSGSTITLSSLGVLGGIVSTPVINHPEVAIVGVNRIVERPMVVGGNIVVRKMMNLSSSFDHRVVDGMDAAAFIQAVRGLLEHPATLFLE</sequence>
<reference key="1">
    <citation type="journal article" date="2000" name="Nature">
        <title>Complete genome sequence of Pseudomonas aeruginosa PAO1, an opportunistic pathogen.</title>
        <authorList>
            <person name="Stover C.K."/>
            <person name="Pham X.-Q.T."/>
            <person name="Erwin A.L."/>
            <person name="Mizoguchi S.D."/>
            <person name="Warrener P."/>
            <person name="Hickey M.J."/>
            <person name="Brinkman F.S.L."/>
            <person name="Hufnagle W.O."/>
            <person name="Kowalik D.J."/>
            <person name="Lagrou M."/>
            <person name="Garber R.L."/>
            <person name="Goltry L."/>
            <person name="Tolentino E."/>
            <person name="Westbrock-Wadman S."/>
            <person name="Yuan Y."/>
            <person name="Brody L.L."/>
            <person name="Coulter S.N."/>
            <person name="Folger K.R."/>
            <person name="Kas A."/>
            <person name="Larbig K."/>
            <person name="Lim R.M."/>
            <person name="Smith K.A."/>
            <person name="Spencer D.H."/>
            <person name="Wong G.K.-S."/>
            <person name="Wu Z."/>
            <person name="Paulsen I.T."/>
            <person name="Reizer J."/>
            <person name="Saier M.H. Jr."/>
            <person name="Hancock R.E.W."/>
            <person name="Lory S."/>
            <person name="Olson M.V."/>
        </authorList>
    </citation>
    <scope>NUCLEOTIDE SEQUENCE [LARGE SCALE GENOMIC DNA]</scope>
    <source>
        <strain>ATCC 15692 / DSM 22644 / CIP 104116 / JCM 14847 / LMG 12228 / 1C / PRS 101 / PAO1</strain>
    </source>
</reference>
<reference key="2">
    <citation type="journal article" date="1988" name="Eur. J. Biochem.">
        <title>Comparison of the amino acid sequences of the transacylase components of branched chain oxoacid dehydrogenase of Pseudomonas putida, and the pyruvate and 2-oxoglutarate dehydrogenases of Escherichia coli.</title>
        <authorList>
            <person name="Burns G."/>
            <person name="Brown T."/>
            <person name="Hatter K."/>
            <person name="Sokatch J.R."/>
        </authorList>
    </citation>
    <scope>PROTEIN SEQUENCE OF 2-22</scope>
    <source>
        <strain>ATCC 15692 / DSM 22644 / CIP 104116 / JCM 14847 / LMG 12228 / 1C / PRS 101 / PAO1</strain>
    </source>
</reference>
<gene>
    <name type="primary">bkdB</name>
    <name type="ordered locus">PA2249</name>
</gene>
<feature type="initiator methionine" description="Removed" evidence="6">
    <location>
        <position position="1"/>
    </location>
</feature>
<feature type="chain" id="PRO_0000287785" description="Lipoamide acyltransferase component of branched-chain alpha-keto acid dehydrogenase complex">
    <location>
        <begin position="2"/>
        <end position="428"/>
    </location>
</feature>
<feature type="domain" description="Lipoyl-binding" evidence="3">
    <location>
        <begin position="3"/>
        <end position="78"/>
    </location>
</feature>
<feature type="domain" description="Peripheral subunit-binding (PSBD)" evidence="4">
    <location>
        <begin position="140"/>
        <end position="177"/>
    </location>
</feature>
<feature type="region of interest" description="Disordered" evidence="5">
    <location>
        <begin position="88"/>
        <end position="145"/>
    </location>
</feature>
<feature type="compositionally biased region" description="Low complexity" evidence="5">
    <location>
        <begin position="89"/>
        <end position="120"/>
    </location>
</feature>
<feature type="compositionally biased region" description="Basic and acidic residues" evidence="5">
    <location>
        <begin position="121"/>
        <end position="136"/>
    </location>
</feature>
<feature type="active site" evidence="2">
    <location>
        <position position="400"/>
    </location>
</feature>
<feature type="active site" evidence="2">
    <location>
        <position position="404"/>
    </location>
</feature>
<feature type="modified residue" description="N6-lipoyllysine" evidence="3">
    <location>
        <position position="44"/>
    </location>
</feature>
<proteinExistence type="evidence at protein level"/>
<evidence type="ECO:0000250" key="1"/>
<evidence type="ECO:0000255" key="2"/>
<evidence type="ECO:0000255" key="3">
    <source>
        <dbReference type="PROSITE-ProRule" id="PRU01066"/>
    </source>
</evidence>
<evidence type="ECO:0000255" key="4">
    <source>
        <dbReference type="PROSITE-ProRule" id="PRU01170"/>
    </source>
</evidence>
<evidence type="ECO:0000256" key="5">
    <source>
        <dbReference type="SAM" id="MobiDB-lite"/>
    </source>
</evidence>
<evidence type="ECO:0000269" key="6">
    <source>
    </source>
</evidence>
<evidence type="ECO:0000305" key="7"/>
<comment type="function">
    <text evidence="1">The branched-chain alpha-keto dehydrogenase complex catalyzes the overall conversion of alpha-keto acids to acyl-CoA and CO(2). It contains multiple copies of three enzymatic components: branched-chain alpha-keto acid decarboxylase (E1), lipoamide acyltransferase (E2) and lipoamide dehydrogenase (E3) (By similarity).</text>
</comment>
<comment type="catalytic activity">
    <reaction>
        <text>N(6)-[(R)-dihydrolipoyl]-L-lysyl-[protein] + 2-methylpropanoyl-CoA = N(6)-[(R)-S(8)-2-methylpropanoyldihydrolipoyl]-L-lysyl-[protein] + CoA</text>
        <dbReference type="Rhea" id="RHEA:18865"/>
        <dbReference type="Rhea" id="RHEA-COMP:10475"/>
        <dbReference type="Rhea" id="RHEA-COMP:10497"/>
        <dbReference type="ChEBI" id="CHEBI:57287"/>
        <dbReference type="ChEBI" id="CHEBI:57338"/>
        <dbReference type="ChEBI" id="CHEBI:83100"/>
        <dbReference type="ChEBI" id="CHEBI:83142"/>
        <dbReference type="EC" id="2.3.1.168"/>
    </reaction>
</comment>
<comment type="cofactor">
    <cofactor evidence="1">
        <name>(R)-lipoate</name>
        <dbReference type="ChEBI" id="CHEBI:83088"/>
    </cofactor>
    <text evidence="1">Binds 1 lipoyl cofactor covalently.</text>
</comment>
<comment type="subunit">
    <text evidence="1">Forms a 24-polypeptide structural core with octahedral symmetry.</text>
</comment>
<comment type="similarity">
    <text evidence="7">Belongs to the 2-oxoacid dehydrogenase family.</text>
</comment>